<sequence>MTLPEHSPLGKPSAYKTEYDASLLFPIPRQPKRAEIGLPEGRALPFFGVDIWNAYEVSWLNLKGKPQVALATFIIPADTPNIVESKSFKLYLNSFNQTKIASPEALQQLLHHDLSEATGGTVQVRLVTEADLGTQKMGELDGLLLDRLDIETDIYEPDPTLLSAEQEESPVEETLVSHLLKSNCLVTGQPDWGSVQIRYVGAPIDQEGLLKYLISFRNHNEFHEQCVERIFTDVMRMCKPVKLAVYARYTRRGGLDINPFRTNYNTPWPDNRRNARQ</sequence>
<name>QUEF_CUPMC</name>
<accession>Q1LRI7</accession>
<feature type="chain" id="PRO_0000247715" description="NADPH-dependent 7-cyano-7-deazaguanine reductase">
    <location>
        <begin position="1"/>
        <end position="277"/>
    </location>
</feature>
<feature type="active site" description="Thioimide intermediate" evidence="1">
    <location>
        <position position="184"/>
    </location>
</feature>
<feature type="active site" description="Proton donor" evidence="1">
    <location>
        <position position="191"/>
    </location>
</feature>
<feature type="binding site" evidence="1">
    <location>
        <begin position="83"/>
        <end position="85"/>
    </location>
    <ligand>
        <name>substrate</name>
    </ligand>
</feature>
<feature type="binding site" evidence="1">
    <location>
        <begin position="85"/>
        <end position="86"/>
    </location>
    <ligand>
        <name>NADPH</name>
        <dbReference type="ChEBI" id="CHEBI:57783"/>
    </ligand>
</feature>
<feature type="binding site" evidence="1">
    <location>
        <begin position="223"/>
        <end position="224"/>
    </location>
    <ligand>
        <name>substrate</name>
    </ligand>
</feature>
<feature type="binding site" evidence="1">
    <location>
        <begin position="252"/>
        <end position="253"/>
    </location>
    <ligand>
        <name>NADPH</name>
        <dbReference type="ChEBI" id="CHEBI:57783"/>
    </ligand>
</feature>
<keyword id="KW-0963">Cytoplasm</keyword>
<keyword id="KW-0521">NADP</keyword>
<keyword id="KW-0560">Oxidoreductase</keyword>
<keyword id="KW-0671">Queuosine biosynthesis</keyword>
<keyword id="KW-1185">Reference proteome</keyword>
<proteinExistence type="inferred from homology"/>
<evidence type="ECO:0000255" key="1">
    <source>
        <dbReference type="HAMAP-Rule" id="MF_00817"/>
    </source>
</evidence>
<protein>
    <recommendedName>
        <fullName evidence="1">NADPH-dependent 7-cyano-7-deazaguanine reductase</fullName>
        <ecNumber evidence="1">1.7.1.13</ecNumber>
    </recommendedName>
    <alternativeName>
        <fullName evidence="1">7-cyano-7-carbaguanine reductase</fullName>
    </alternativeName>
    <alternativeName>
        <fullName evidence="1">NADPH-dependent nitrile oxidoreductase</fullName>
    </alternativeName>
    <alternativeName>
        <fullName evidence="1">PreQ(0) reductase</fullName>
    </alternativeName>
</protein>
<gene>
    <name evidence="1" type="primary">queF</name>
    <name type="ordered locus">Rmet_0353</name>
</gene>
<comment type="function">
    <text evidence="1">Catalyzes the NADPH-dependent reduction of 7-cyano-7-deazaguanine (preQ0) to 7-aminomethyl-7-deazaguanine (preQ1).</text>
</comment>
<comment type="catalytic activity">
    <reaction evidence="1">
        <text>7-aminomethyl-7-carbaguanine + 2 NADP(+) = 7-cyano-7-deazaguanine + 2 NADPH + 3 H(+)</text>
        <dbReference type="Rhea" id="RHEA:13409"/>
        <dbReference type="ChEBI" id="CHEBI:15378"/>
        <dbReference type="ChEBI" id="CHEBI:45075"/>
        <dbReference type="ChEBI" id="CHEBI:57783"/>
        <dbReference type="ChEBI" id="CHEBI:58349"/>
        <dbReference type="ChEBI" id="CHEBI:58703"/>
        <dbReference type="EC" id="1.7.1.13"/>
    </reaction>
</comment>
<comment type="pathway">
    <text evidence="1">tRNA modification; tRNA-queuosine biosynthesis.</text>
</comment>
<comment type="subunit">
    <text evidence="1">Homodimer.</text>
</comment>
<comment type="subcellular location">
    <subcellularLocation>
        <location evidence="1">Cytoplasm</location>
    </subcellularLocation>
</comment>
<comment type="similarity">
    <text evidence="1">Belongs to the GTP cyclohydrolase I family. QueF type 2 subfamily.</text>
</comment>
<organism>
    <name type="scientific">Cupriavidus metallidurans (strain ATCC 43123 / DSM 2839 / NBRC 102507 / CH34)</name>
    <name type="common">Ralstonia metallidurans</name>
    <dbReference type="NCBI Taxonomy" id="266264"/>
    <lineage>
        <taxon>Bacteria</taxon>
        <taxon>Pseudomonadati</taxon>
        <taxon>Pseudomonadota</taxon>
        <taxon>Betaproteobacteria</taxon>
        <taxon>Burkholderiales</taxon>
        <taxon>Burkholderiaceae</taxon>
        <taxon>Cupriavidus</taxon>
    </lineage>
</organism>
<dbReference type="EC" id="1.7.1.13" evidence="1"/>
<dbReference type="EMBL" id="CP000352">
    <property type="protein sequence ID" value="ABF07239.1"/>
    <property type="molecule type" value="Genomic_DNA"/>
</dbReference>
<dbReference type="RefSeq" id="WP_011515232.1">
    <property type="nucleotide sequence ID" value="NC_007973.1"/>
</dbReference>
<dbReference type="SMR" id="Q1LRI7"/>
<dbReference type="STRING" id="266264.Rmet_0353"/>
<dbReference type="KEGG" id="rme:Rmet_0353"/>
<dbReference type="eggNOG" id="COG0780">
    <property type="taxonomic scope" value="Bacteria"/>
</dbReference>
<dbReference type="eggNOG" id="COG2904">
    <property type="taxonomic scope" value="Bacteria"/>
</dbReference>
<dbReference type="HOGENOM" id="CLU_054738_0_0_4"/>
<dbReference type="UniPathway" id="UPA00392"/>
<dbReference type="Proteomes" id="UP000002429">
    <property type="component" value="Chromosome"/>
</dbReference>
<dbReference type="GO" id="GO:0005737">
    <property type="term" value="C:cytoplasm"/>
    <property type="evidence" value="ECO:0007669"/>
    <property type="project" value="UniProtKB-SubCell"/>
</dbReference>
<dbReference type="GO" id="GO:0033739">
    <property type="term" value="F:preQ1 synthase activity"/>
    <property type="evidence" value="ECO:0007669"/>
    <property type="project" value="UniProtKB-UniRule"/>
</dbReference>
<dbReference type="GO" id="GO:0008616">
    <property type="term" value="P:queuosine biosynthetic process"/>
    <property type="evidence" value="ECO:0007669"/>
    <property type="project" value="UniProtKB-UniRule"/>
</dbReference>
<dbReference type="GO" id="GO:0006400">
    <property type="term" value="P:tRNA modification"/>
    <property type="evidence" value="ECO:0007669"/>
    <property type="project" value="UniProtKB-UniRule"/>
</dbReference>
<dbReference type="Gene3D" id="3.30.1130.10">
    <property type="match status" value="2"/>
</dbReference>
<dbReference type="HAMAP" id="MF_00817">
    <property type="entry name" value="QueF_type2"/>
    <property type="match status" value="1"/>
</dbReference>
<dbReference type="InterPro" id="IPR043133">
    <property type="entry name" value="GTP-CH-I_C/QueF"/>
</dbReference>
<dbReference type="InterPro" id="IPR050084">
    <property type="entry name" value="NADPH_dep_7-cyano-7-deazaG_red"/>
</dbReference>
<dbReference type="InterPro" id="IPR029500">
    <property type="entry name" value="QueF"/>
</dbReference>
<dbReference type="InterPro" id="IPR029139">
    <property type="entry name" value="QueF_N"/>
</dbReference>
<dbReference type="InterPro" id="IPR016428">
    <property type="entry name" value="QueF_type2"/>
</dbReference>
<dbReference type="NCBIfam" id="TIGR03138">
    <property type="entry name" value="QueF"/>
    <property type="match status" value="1"/>
</dbReference>
<dbReference type="PANTHER" id="PTHR34354">
    <property type="entry name" value="NADPH-DEPENDENT 7-CYANO-7-DEAZAGUANINE REDUCTASE"/>
    <property type="match status" value="1"/>
</dbReference>
<dbReference type="PANTHER" id="PTHR34354:SF1">
    <property type="entry name" value="NADPH-DEPENDENT 7-CYANO-7-DEAZAGUANINE REDUCTASE"/>
    <property type="match status" value="1"/>
</dbReference>
<dbReference type="Pfam" id="PF14489">
    <property type="entry name" value="QueF"/>
    <property type="match status" value="1"/>
</dbReference>
<dbReference type="Pfam" id="PF14819">
    <property type="entry name" value="QueF_N"/>
    <property type="match status" value="1"/>
</dbReference>
<dbReference type="PIRSF" id="PIRSF004750">
    <property type="entry name" value="Nitrile_oxidored_YqcD_prd"/>
    <property type="match status" value="1"/>
</dbReference>
<dbReference type="SUPFAM" id="SSF55620">
    <property type="entry name" value="Tetrahydrobiopterin biosynthesis enzymes-like"/>
    <property type="match status" value="1"/>
</dbReference>
<reference key="1">
    <citation type="journal article" date="2010" name="PLoS ONE">
        <title>The complete genome sequence of Cupriavidus metallidurans strain CH34, a master survivalist in harsh and anthropogenic environments.</title>
        <authorList>
            <person name="Janssen P.J."/>
            <person name="Van Houdt R."/>
            <person name="Moors H."/>
            <person name="Monsieurs P."/>
            <person name="Morin N."/>
            <person name="Michaux A."/>
            <person name="Benotmane M.A."/>
            <person name="Leys N."/>
            <person name="Vallaeys T."/>
            <person name="Lapidus A."/>
            <person name="Monchy S."/>
            <person name="Medigue C."/>
            <person name="Taghavi S."/>
            <person name="McCorkle S."/>
            <person name="Dunn J."/>
            <person name="van der Lelie D."/>
            <person name="Mergeay M."/>
        </authorList>
    </citation>
    <scope>NUCLEOTIDE SEQUENCE [LARGE SCALE GENOMIC DNA]</scope>
    <source>
        <strain>ATCC 43123 / DSM 2839 / NBRC 102507 / CH34</strain>
    </source>
</reference>